<accession>Q72PQ1</accession>
<comment type="function">
    <text evidence="1">GTPase that plays an essential role in the late steps of ribosome biogenesis.</text>
</comment>
<comment type="subunit">
    <text evidence="1">Associates with the 50S ribosomal subunit.</text>
</comment>
<comment type="similarity">
    <text evidence="1">Belongs to the TRAFAC class TrmE-Era-EngA-EngB-Septin-like GTPase superfamily. EngA (Der) GTPase family.</text>
</comment>
<gene>
    <name evidence="1" type="primary">der</name>
    <name type="synonym">engA</name>
    <name type="ordered locus">LIC_12417</name>
</gene>
<reference key="1">
    <citation type="journal article" date="2004" name="J. Bacteriol.">
        <title>Comparative genomics of two Leptospira interrogans serovars reveals novel insights into physiology and pathogenesis.</title>
        <authorList>
            <person name="Nascimento A.L.T.O."/>
            <person name="Ko A.I."/>
            <person name="Martins E.A.L."/>
            <person name="Monteiro-Vitorello C.B."/>
            <person name="Ho P.L."/>
            <person name="Haake D.A."/>
            <person name="Verjovski-Almeida S."/>
            <person name="Hartskeerl R.A."/>
            <person name="Marques M.V."/>
            <person name="Oliveira M.C."/>
            <person name="Menck C.F.M."/>
            <person name="Leite L.C.C."/>
            <person name="Carrer H."/>
            <person name="Coutinho L.L."/>
            <person name="Degrave W.M."/>
            <person name="Dellagostin O.A."/>
            <person name="El-Dorry H."/>
            <person name="Ferro E.S."/>
            <person name="Ferro M.I.T."/>
            <person name="Furlan L.R."/>
            <person name="Gamberini M."/>
            <person name="Giglioti E.A."/>
            <person name="Goes-Neto A."/>
            <person name="Goldman G.H."/>
            <person name="Goldman M.H.S."/>
            <person name="Harakava R."/>
            <person name="Jeronimo S.M.B."/>
            <person name="Junqueira-de-Azevedo I.L.M."/>
            <person name="Kimura E.T."/>
            <person name="Kuramae E.E."/>
            <person name="Lemos E.G.M."/>
            <person name="Lemos M.V.F."/>
            <person name="Marino C.L."/>
            <person name="Nunes L.R."/>
            <person name="de Oliveira R.C."/>
            <person name="Pereira G.G."/>
            <person name="Reis M.S."/>
            <person name="Schriefer A."/>
            <person name="Siqueira W.J."/>
            <person name="Sommer P."/>
            <person name="Tsai S.M."/>
            <person name="Simpson A.J.G."/>
            <person name="Ferro J.A."/>
            <person name="Camargo L.E.A."/>
            <person name="Kitajima J.P."/>
            <person name="Setubal J.C."/>
            <person name="Van Sluys M.A."/>
        </authorList>
    </citation>
    <scope>NUCLEOTIDE SEQUENCE [LARGE SCALE GENOMIC DNA]</scope>
    <source>
        <strain>Fiocruz L1-130</strain>
    </source>
</reference>
<feature type="chain" id="PRO_0000179006" description="GTPase Der">
    <location>
        <begin position="1"/>
        <end position="489"/>
    </location>
</feature>
<feature type="domain" description="EngA-type G 1">
    <location>
        <begin position="30"/>
        <end position="199"/>
    </location>
</feature>
<feature type="domain" description="EngA-type G 2">
    <location>
        <begin position="227"/>
        <end position="403"/>
    </location>
</feature>
<feature type="domain" description="KH-like" evidence="1">
    <location>
        <begin position="404"/>
        <end position="488"/>
    </location>
</feature>
<feature type="binding site" evidence="1">
    <location>
        <begin position="36"/>
        <end position="43"/>
    </location>
    <ligand>
        <name>GTP</name>
        <dbReference type="ChEBI" id="CHEBI:37565"/>
        <label>1</label>
    </ligand>
</feature>
<feature type="binding site" evidence="1">
    <location>
        <begin position="85"/>
        <end position="89"/>
    </location>
    <ligand>
        <name>GTP</name>
        <dbReference type="ChEBI" id="CHEBI:37565"/>
        <label>1</label>
    </ligand>
</feature>
<feature type="binding site" evidence="1">
    <location>
        <begin position="151"/>
        <end position="154"/>
    </location>
    <ligand>
        <name>GTP</name>
        <dbReference type="ChEBI" id="CHEBI:37565"/>
        <label>1</label>
    </ligand>
</feature>
<feature type="binding site" evidence="1">
    <location>
        <begin position="233"/>
        <end position="240"/>
    </location>
    <ligand>
        <name>GTP</name>
        <dbReference type="ChEBI" id="CHEBI:37565"/>
        <label>2</label>
    </ligand>
</feature>
<feature type="binding site" evidence="1">
    <location>
        <begin position="280"/>
        <end position="284"/>
    </location>
    <ligand>
        <name>GTP</name>
        <dbReference type="ChEBI" id="CHEBI:37565"/>
        <label>2</label>
    </ligand>
</feature>
<feature type="binding site" evidence="1">
    <location>
        <begin position="345"/>
        <end position="348"/>
    </location>
    <ligand>
        <name>GTP</name>
        <dbReference type="ChEBI" id="CHEBI:37565"/>
        <label>2</label>
    </ligand>
</feature>
<dbReference type="EMBL" id="AE016823">
    <property type="protein sequence ID" value="AAS70985.1"/>
    <property type="molecule type" value="Genomic_DNA"/>
</dbReference>
<dbReference type="RefSeq" id="WP_001029804.1">
    <property type="nucleotide sequence ID" value="NC_005823.1"/>
</dbReference>
<dbReference type="SMR" id="Q72PQ1"/>
<dbReference type="GeneID" id="61142297"/>
<dbReference type="KEGG" id="lic:LIC_12417"/>
<dbReference type="HOGENOM" id="CLU_016077_6_2_12"/>
<dbReference type="Proteomes" id="UP000007037">
    <property type="component" value="Chromosome I"/>
</dbReference>
<dbReference type="GO" id="GO:0005525">
    <property type="term" value="F:GTP binding"/>
    <property type="evidence" value="ECO:0007669"/>
    <property type="project" value="UniProtKB-UniRule"/>
</dbReference>
<dbReference type="GO" id="GO:0043022">
    <property type="term" value="F:ribosome binding"/>
    <property type="evidence" value="ECO:0007669"/>
    <property type="project" value="TreeGrafter"/>
</dbReference>
<dbReference type="GO" id="GO:0042254">
    <property type="term" value="P:ribosome biogenesis"/>
    <property type="evidence" value="ECO:0007669"/>
    <property type="project" value="UniProtKB-KW"/>
</dbReference>
<dbReference type="CDD" id="cd01894">
    <property type="entry name" value="EngA1"/>
    <property type="match status" value="1"/>
</dbReference>
<dbReference type="CDD" id="cd01895">
    <property type="entry name" value="EngA2"/>
    <property type="match status" value="1"/>
</dbReference>
<dbReference type="FunFam" id="3.40.50.300:FF:000040">
    <property type="entry name" value="GTPase Der"/>
    <property type="match status" value="1"/>
</dbReference>
<dbReference type="Gene3D" id="3.30.300.20">
    <property type="match status" value="1"/>
</dbReference>
<dbReference type="Gene3D" id="3.40.50.300">
    <property type="entry name" value="P-loop containing nucleotide triphosphate hydrolases"/>
    <property type="match status" value="2"/>
</dbReference>
<dbReference type="HAMAP" id="MF_00195">
    <property type="entry name" value="GTPase_Der"/>
    <property type="match status" value="1"/>
</dbReference>
<dbReference type="InterPro" id="IPR031166">
    <property type="entry name" value="G_ENGA"/>
</dbReference>
<dbReference type="InterPro" id="IPR006073">
    <property type="entry name" value="GTP-bd"/>
</dbReference>
<dbReference type="InterPro" id="IPR016484">
    <property type="entry name" value="GTPase_Der"/>
</dbReference>
<dbReference type="InterPro" id="IPR032859">
    <property type="entry name" value="KH_dom-like"/>
</dbReference>
<dbReference type="InterPro" id="IPR015946">
    <property type="entry name" value="KH_dom-like_a/b"/>
</dbReference>
<dbReference type="InterPro" id="IPR027417">
    <property type="entry name" value="P-loop_NTPase"/>
</dbReference>
<dbReference type="InterPro" id="IPR005225">
    <property type="entry name" value="Small_GTP-bd"/>
</dbReference>
<dbReference type="NCBIfam" id="TIGR03594">
    <property type="entry name" value="GTPase_EngA"/>
    <property type="match status" value="1"/>
</dbReference>
<dbReference type="NCBIfam" id="TIGR00231">
    <property type="entry name" value="small_GTP"/>
    <property type="match status" value="2"/>
</dbReference>
<dbReference type="PANTHER" id="PTHR43834">
    <property type="entry name" value="GTPASE DER"/>
    <property type="match status" value="1"/>
</dbReference>
<dbReference type="PANTHER" id="PTHR43834:SF6">
    <property type="entry name" value="GTPASE DER"/>
    <property type="match status" value="1"/>
</dbReference>
<dbReference type="Pfam" id="PF14714">
    <property type="entry name" value="KH_dom-like"/>
    <property type="match status" value="1"/>
</dbReference>
<dbReference type="Pfam" id="PF01926">
    <property type="entry name" value="MMR_HSR1"/>
    <property type="match status" value="2"/>
</dbReference>
<dbReference type="PIRSF" id="PIRSF006485">
    <property type="entry name" value="GTP-binding_EngA"/>
    <property type="match status" value="1"/>
</dbReference>
<dbReference type="PRINTS" id="PR00326">
    <property type="entry name" value="GTP1OBG"/>
</dbReference>
<dbReference type="SUPFAM" id="SSF52540">
    <property type="entry name" value="P-loop containing nucleoside triphosphate hydrolases"/>
    <property type="match status" value="2"/>
</dbReference>
<dbReference type="PROSITE" id="PS51712">
    <property type="entry name" value="G_ENGA"/>
    <property type="match status" value="2"/>
</dbReference>
<organism>
    <name type="scientific">Leptospira interrogans serogroup Icterohaemorrhagiae serovar copenhageni (strain Fiocruz L1-130)</name>
    <dbReference type="NCBI Taxonomy" id="267671"/>
    <lineage>
        <taxon>Bacteria</taxon>
        <taxon>Pseudomonadati</taxon>
        <taxon>Spirochaetota</taxon>
        <taxon>Spirochaetia</taxon>
        <taxon>Leptospirales</taxon>
        <taxon>Leptospiraceae</taxon>
        <taxon>Leptospira</taxon>
    </lineage>
</organism>
<name>DER_LEPIC</name>
<keyword id="KW-0342">GTP-binding</keyword>
<keyword id="KW-0547">Nucleotide-binding</keyword>
<keyword id="KW-0677">Repeat</keyword>
<keyword id="KW-0690">Ribosome biogenesis</keyword>
<protein>
    <recommendedName>
        <fullName evidence="1">GTPase Der</fullName>
    </recommendedName>
    <alternativeName>
        <fullName evidence="1">GTP-binding protein EngA</fullName>
    </alternativeName>
</protein>
<proteinExistence type="inferred from homology"/>
<sequence length="489" mass="55605">MAKAVKKEIAKSEEVVSIKAPRKEPGKKIPVVSIVGRQNVGKSTLFNSLLKKKLAITEDYPGVTRDVLSARIYQEEKDLDFYLCDTPGLDIENPDSLSQTILETAYGQLRESDVIVFLLDKNLITTADHGLLNYLRREDKVANKPIIYCVNKADKELDEFDLEEFYRMGLSEVLPISAIGRKNLGLLLEKIQFFLKDKPGKVWIEKISASKKKEAQPLPLAEEDYEFRLAIVGKPNSGKSSLLNAICGYERAVVSDVAGTTRDSIDTLLEFGDRRLLLTDTAGIRKQSKTAEALEFYSYQRTIKAIESSDLVIHLLDAKKGFGDFDKKITSLLQEKGKPFLLAVNKWDSIEDKTDKTFKEYKEKLYSRFPLLNEVPIITISATERLRVQKLMDLSFDLASRSHRKVSTSELNKNLKNWMGLAGRSFSAHQPPKMLYCTQVSTSPFHLILFVNHVEYFKSNLVSFLKKKLTETYDLQGIPIRLEFRSDRK</sequence>
<evidence type="ECO:0000255" key="1">
    <source>
        <dbReference type="HAMAP-Rule" id="MF_00195"/>
    </source>
</evidence>